<dbReference type="STRING" id="4113.P24744"/>
<dbReference type="PaxDb" id="4113-PGSC0003DMT400026265"/>
<dbReference type="InParanoid" id="P24744"/>
<dbReference type="Proteomes" id="UP000011115">
    <property type="component" value="Unassembled WGS sequence"/>
</dbReference>
<dbReference type="GO" id="GO:0004869">
    <property type="term" value="F:cysteine-type endopeptidase inhibitor activity"/>
    <property type="evidence" value="ECO:0007669"/>
    <property type="project" value="UniProtKB-KW"/>
</dbReference>
<dbReference type="GO" id="GO:0004867">
    <property type="term" value="F:serine-type endopeptidase inhibitor activity"/>
    <property type="evidence" value="ECO:0007669"/>
    <property type="project" value="UniProtKB-KW"/>
</dbReference>
<dbReference type="InterPro" id="IPR002160">
    <property type="entry name" value="Prot_inh_Kunz-lg"/>
</dbReference>
<dbReference type="PROSITE" id="PS00283">
    <property type="entry name" value="SOYBEAN_KUNITZ"/>
    <property type="match status" value="1"/>
</dbReference>
<name>CPI2_SOLTU</name>
<keyword id="KW-0903">Direct protein sequencing</keyword>
<keyword id="KW-0646">Protease inhibitor</keyword>
<keyword id="KW-1185">Reference proteome</keyword>
<keyword id="KW-0722">Serine protease inhibitor</keyword>
<keyword id="KW-0789">Thiol protease inhibitor</keyword>
<feature type="chain" id="PRO_0000083314" description="Cysteine protease inhibitor 2">
    <location>
        <begin position="1"/>
        <end position="25" status="greater than"/>
    </location>
</feature>
<feature type="non-terminal residue">
    <location>
        <position position="25"/>
    </location>
</feature>
<protein>
    <recommendedName>
        <fullName>Cysteine protease inhibitor 2</fullName>
    </recommendedName>
    <alternativeName>
        <fullName>PKI-2</fullName>
    </alternativeName>
</protein>
<comment type="function">
    <text>Inhibitor of subtilisin. Inhibits moderately trypsin and chymotrypsin (serine proteases). May protect the plant by inhibiting proteases of invading organisms.</text>
</comment>
<comment type="tissue specificity">
    <text>Cortex of tuber.</text>
</comment>
<comment type="similarity">
    <text evidence="1">Belongs to the protease inhibitor I3 (leguminous Kunitz-type inhibitor) family.</text>
</comment>
<comment type="caution">
    <text evidence="1">PubMed:16668362 postulates a moderate inhibition of serine proteases but the sequence homology points to a cysteine protease inhibitor.</text>
</comment>
<reference key="1">
    <citation type="journal article" date="1991" name="Plant Physiol.">
        <title>Two Kunitz-type proteinase inhibitors from potato tubers.</title>
        <authorList>
            <person name="Walsh T.A."/>
            <person name="Twitchell W.P."/>
        </authorList>
    </citation>
    <scope>PROTEIN SEQUENCE</scope>
    <source>
        <strain>cv. Russet Burbank-0</strain>
        <tissue>Tuber</tissue>
    </source>
</reference>
<evidence type="ECO:0000305" key="1"/>
<accession>P24744</accession>
<proteinExistence type="evidence at protein level"/>
<organism>
    <name type="scientific">Solanum tuberosum</name>
    <name type="common">Potato</name>
    <dbReference type="NCBI Taxonomy" id="4113"/>
    <lineage>
        <taxon>Eukaryota</taxon>
        <taxon>Viridiplantae</taxon>
        <taxon>Streptophyta</taxon>
        <taxon>Embryophyta</taxon>
        <taxon>Tracheophyta</taxon>
        <taxon>Spermatophyta</taxon>
        <taxon>Magnoliopsida</taxon>
        <taxon>eudicotyledons</taxon>
        <taxon>Gunneridae</taxon>
        <taxon>Pentapetalae</taxon>
        <taxon>asterids</taxon>
        <taxon>lamiids</taxon>
        <taxon>Solanales</taxon>
        <taxon>Solanaceae</taxon>
        <taxon>Solanoideae</taxon>
        <taxon>Solaneae</taxon>
        <taxon>Solanum</taxon>
    </lineage>
</organism>
<sequence length="25" mass="2920">LVLPEVYDQDGHPLRIGQRYIINNP</sequence>